<keyword id="KW-0030">Aminoacyl-tRNA synthetase</keyword>
<keyword id="KW-0067">ATP-binding</keyword>
<keyword id="KW-0963">Cytoplasm</keyword>
<keyword id="KW-0436">Ligase</keyword>
<keyword id="KW-0547">Nucleotide-binding</keyword>
<keyword id="KW-0648">Protein biosynthesis</keyword>
<keyword id="KW-1185">Reference proteome</keyword>
<protein>
    <recommendedName>
        <fullName evidence="1">Aspartate--tRNA(Asp/Asn) ligase</fullName>
        <ecNumber evidence="1">6.1.1.23</ecNumber>
    </recommendedName>
    <alternativeName>
        <fullName evidence="1">Aspartyl-tRNA synthetase</fullName>
        <shortName evidence="1">AspRS</shortName>
    </alternativeName>
    <alternativeName>
        <fullName evidence="1">Non-discriminating aspartyl-tRNA synthetase</fullName>
        <shortName evidence="1">ND-AspRS</shortName>
    </alternativeName>
</protein>
<reference key="1">
    <citation type="journal article" date="1998" name="Nature">
        <title>The genome sequence of Rickettsia prowazekii and the origin of mitochondria.</title>
        <authorList>
            <person name="Andersson S.G.E."/>
            <person name="Zomorodipour A."/>
            <person name="Andersson J.O."/>
            <person name="Sicheritz-Ponten T."/>
            <person name="Alsmark U.C.M."/>
            <person name="Podowski R.M."/>
            <person name="Naeslund A.K."/>
            <person name="Eriksson A.-S."/>
            <person name="Winkler H.H."/>
            <person name="Kurland C.G."/>
        </authorList>
    </citation>
    <scope>NUCLEOTIDE SEQUENCE [LARGE SCALE GENOMIC DNA]</scope>
    <source>
        <strain>Madrid E</strain>
    </source>
</reference>
<proteinExistence type="inferred from homology"/>
<dbReference type="EC" id="6.1.1.23" evidence="1"/>
<dbReference type="EMBL" id="AJ235270">
    <property type="protein sequence ID" value="CAA14613.1"/>
    <property type="molecule type" value="Genomic_DNA"/>
</dbReference>
<dbReference type="PIR" id="F71724">
    <property type="entry name" value="F71724"/>
</dbReference>
<dbReference type="RefSeq" id="NP_220536.1">
    <property type="nucleotide sequence ID" value="NC_000963.1"/>
</dbReference>
<dbReference type="RefSeq" id="WP_004599762.1">
    <property type="nucleotide sequence ID" value="NC_000963.1"/>
</dbReference>
<dbReference type="SMR" id="Q9ZE17"/>
<dbReference type="STRING" id="272947.gene:17555228"/>
<dbReference type="EnsemblBacteria" id="CAA14613">
    <property type="protein sequence ID" value="CAA14613"/>
    <property type="gene ID" value="CAA14613"/>
</dbReference>
<dbReference type="GeneID" id="57569273"/>
<dbReference type="KEGG" id="rpr:RP145"/>
<dbReference type="PATRIC" id="fig|272947.5.peg.148"/>
<dbReference type="eggNOG" id="COG0173">
    <property type="taxonomic scope" value="Bacteria"/>
</dbReference>
<dbReference type="HOGENOM" id="CLU_014330_3_2_5"/>
<dbReference type="OrthoDB" id="9802326at2"/>
<dbReference type="Proteomes" id="UP000002480">
    <property type="component" value="Chromosome"/>
</dbReference>
<dbReference type="GO" id="GO:0005737">
    <property type="term" value="C:cytoplasm"/>
    <property type="evidence" value="ECO:0007669"/>
    <property type="project" value="UniProtKB-SubCell"/>
</dbReference>
<dbReference type="GO" id="GO:0004815">
    <property type="term" value="F:aspartate-tRNA ligase activity"/>
    <property type="evidence" value="ECO:0007669"/>
    <property type="project" value="UniProtKB-UniRule"/>
</dbReference>
<dbReference type="GO" id="GO:0050560">
    <property type="term" value="F:aspartate-tRNA(Asn) ligase activity"/>
    <property type="evidence" value="ECO:0007669"/>
    <property type="project" value="UniProtKB-EC"/>
</dbReference>
<dbReference type="GO" id="GO:0005524">
    <property type="term" value="F:ATP binding"/>
    <property type="evidence" value="ECO:0007669"/>
    <property type="project" value="UniProtKB-UniRule"/>
</dbReference>
<dbReference type="GO" id="GO:0003676">
    <property type="term" value="F:nucleic acid binding"/>
    <property type="evidence" value="ECO:0007669"/>
    <property type="project" value="InterPro"/>
</dbReference>
<dbReference type="GO" id="GO:0006422">
    <property type="term" value="P:aspartyl-tRNA aminoacylation"/>
    <property type="evidence" value="ECO:0007669"/>
    <property type="project" value="UniProtKB-UniRule"/>
</dbReference>
<dbReference type="CDD" id="cd00777">
    <property type="entry name" value="AspRS_core"/>
    <property type="match status" value="1"/>
</dbReference>
<dbReference type="CDD" id="cd04317">
    <property type="entry name" value="EcAspRS_like_N"/>
    <property type="match status" value="1"/>
</dbReference>
<dbReference type="Gene3D" id="3.30.930.10">
    <property type="entry name" value="Bira Bifunctional Protein, Domain 2"/>
    <property type="match status" value="1"/>
</dbReference>
<dbReference type="Gene3D" id="3.30.1360.30">
    <property type="entry name" value="GAD-like domain"/>
    <property type="match status" value="1"/>
</dbReference>
<dbReference type="Gene3D" id="2.40.50.140">
    <property type="entry name" value="Nucleic acid-binding proteins"/>
    <property type="match status" value="1"/>
</dbReference>
<dbReference type="HAMAP" id="MF_00044">
    <property type="entry name" value="Asp_tRNA_synth_type1"/>
    <property type="match status" value="1"/>
</dbReference>
<dbReference type="InterPro" id="IPR004364">
    <property type="entry name" value="Aa-tRNA-synt_II"/>
</dbReference>
<dbReference type="InterPro" id="IPR006195">
    <property type="entry name" value="aa-tRNA-synth_II"/>
</dbReference>
<dbReference type="InterPro" id="IPR045864">
    <property type="entry name" value="aa-tRNA-synth_II/BPL/LPL"/>
</dbReference>
<dbReference type="InterPro" id="IPR004524">
    <property type="entry name" value="Asp-tRNA-ligase_1"/>
</dbReference>
<dbReference type="InterPro" id="IPR047089">
    <property type="entry name" value="Asp-tRNA-ligase_1_N"/>
</dbReference>
<dbReference type="InterPro" id="IPR002312">
    <property type="entry name" value="Asp/Asn-tRNA-synth_IIb"/>
</dbReference>
<dbReference type="InterPro" id="IPR047090">
    <property type="entry name" value="AspRS_core"/>
</dbReference>
<dbReference type="InterPro" id="IPR004115">
    <property type="entry name" value="GAD-like_sf"/>
</dbReference>
<dbReference type="InterPro" id="IPR029351">
    <property type="entry name" value="GAD_dom"/>
</dbReference>
<dbReference type="InterPro" id="IPR012340">
    <property type="entry name" value="NA-bd_OB-fold"/>
</dbReference>
<dbReference type="InterPro" id="IPR004365">
    <property type="entry name" value="NA-bd_OB_tRNA"/>
</dbReference>
<dbReference type="NCBIfam" id="TIGR00459">
    <property type="entry name" value="aspS_bact"/>
    <property type="match status" value="1"/>
</dbReference>
<dbReference type="NCBIfam" id="NF001750">
    <property type="entry name" value="PRK00476.1"/>
    <property type="match status" value="1"/>
</dbReference>
<dbReference type="PANTHER" id="PTHR22594:SF5">
    <property type="entry name" value="ASPARTATE--TRNA LIGASE, MITOCHONDRIAL"/>
    <property type="match status" value="1"/>
</dbReference>
<dbReference type="PANTHER" id="PTHR22594">
    <property type="entry name" value="ASPARTYL/LYSYL-TRNA SYNTHETASE"/>
    <property type="match status" value="1"/>
</dbReference>
<dbReference type="Pfam" id="PF02938">
    <property type="entry name" value="GAD"/>
    <property type="match status" value="1"/>
</dbReference>
<dbReference type="Pfam" id="PF00152">
    <property type="entry name" value="tRNA-synt_2"/>
    <property type="match status" value="1"/>
</dbReference>
<dbReference type="Pfam" id="PF01336">
    <property type="entry name" value="tRNA_anti-codon"/>
    <property type="match status" value="1"/>
</dbReference>
<dbReference type="PRINTS" id="PR01042">
    <property type="entry name" value="TRNASYNTHASP"/>
</dbReference>
<dbReference type="SUPFAM" id="SSF55681">
    <property type="entry name" value="Class II aaRS and biotin synthetases"/>
    <property type="match status" value="1"/>
</dbReference>
<dbReference type="SUPFAM" id="SSF55261">
    <property type="entry name" value="GAD domain-like"/>
    <property type="match status" value="1"/>
</dbReference>
<dbReference type="SUPFAM" id="SSF50249">
    <property type="entry name" value="Nucleic acid-binding proteins"/>
    <property type="match status" value="1"/>
</dbReference>
<dbReference type="PROSITE" id="PS50862">
    <property type="entry name" value="AA_TRNA_LIGASE_II"/>
    <property type="match status" value="1"/>
</dbReference>
<comment type="function">
    <text evidence="1">Aspartyl-tRNA synthetase with relaxed tRNA specificity since it is able to aspartylate not only its cognate tRNA(Asp) but also tRNA(Asn). Reaction proceeds in two steps: L-aspartate is first activated by ATP to form Asp-AMP and then transferred to the acceptor end of tRNA(Asp/Asn).</text>
</comment>
<comment type="catalytic activity">
    <reaction evidence="1">
        <text>tRNA(Asx) + L-aspartate + ATP = L-aspartyl-tRNA(Asx) + AMP + diphosphate</text>
        <dbReference type="Rhea" id="RHEA:18349"/>
        <dbReference type="Rhea" id="RHEA-COMP:9710"/>
        <dbReference type="Rhea" id="RHEA-COMP:9711"/>
        <dbReference type="ChEBI" id="CHEBI:29991"/>
        <dbReference type="ChEBI" id="CHEBI:30616"/>
        <dbReference type="ChEBI" id="CHEBI:33019"/>
        <dbReference type="ChEBI" id="CHEBI:78442"/>
        <dbReference type="ChEBI" id="CHEBI:78516"/>
        <dbReference type="ChEBI" id="CHEBI:456215"/>
        <dbReference type="EC" id="6.1.1.23"/>
    </reaction>
</comment>
<comment type="subunit">
    <text evidence="1">Homodimer.</text>
</comment>
<comment type="subcellular location">
    <subcellularLocation>
        <location evidence="1">Cytoplasm</location>
    </subcellularLocation>
</comment>
<comment type="similarity">
    <text evidence="1">Belongs to the class-II aminoacyl-tRNA synthetase family. Type 1 subfamily.</text>
</comment>
<name>SYDND_RICPR</name>
<organism>
    <name type="scientific">Rickettsia prowazekii (strain Madrid E)</name>
    <dbReference type="NCBI Taxonomy" id="272947"/>
    <lineage>
        <taxon>Bacteria</taxon>
        <taxon>Pseudomonadati</taxon>
        <taxon>Pseudomonadota</taxon>
        <taxon>Alphaproteobacteria</taxon>
        <taxon>Rickettsiales</taxon>
        <taxon>Rickettsiaceae</taxon>
        <taxon>Rickettsieae</taxon>
        <taxon>Rickettsia</taxon>
        <taxon>typhus group</taxon>
    </lineage>
</organism>
<accession>Q9ZE17</accession>
<sequence length="605" mass="68465">MHKYRTHNCNELQLSNVGQEVKLSGWVHRRRDHGNLVFIDLRDHYGITQIVFTDQNQQLMYDASRLCYESVITVSGTVVARSLDTINNKLPTGYVEVLAMECIVESASSPLPFVINNEKEAPEESRLKHRFLDLRREKLHNNIILRSQVIAHIRHLMIARGFTELQTPILTSSSPEGARDFLVPSRIHPGKFYALPQAPQQFKQLLMVAGFDRYFQIAPCFRDEDARADRSPGEFYQLDLEMSFVTQEDIFNTIEPVLYDLFTKFTNKTVSNTPFVRIPYNESMLKYGSDKPDLRNPIIISDVTEVFRDSNFTIFRENIKKGSVVHAIPAPQAASLPRSFFDKMIEFAISKGARGLGYIQFSESGEAKGPLSKFLTGQQLEILKATANTSNGDAVFFVSDKKDEAVKLCGKVRIKLGEELNLLEKDCFKFCWITDFPFYELNEETGKIDFSHNPFSMPQGGIDALEQAKTTEELLALTAYQYDIVCNGIELSSGAIRNHKPEIMYKAFSIAGYSAEEVEQRFGAMIKAFRFGAPPHGGIAPGIDRIVMLLAEATNIREIIAFPLNQQAEDLLMNAPSYVEEKALKELSIMLSPSSRKIHKKNTNL</sequence>
<feature type="chain" id="PRO_0000110933" description="Aspartate--tRNA(Asp/Asn) ligase">
    <location>
        <begin position="1"/>
        <end position="605"/>
    </location>
</feature>
<feature type="region of interest" description="Aspartate" evidence="1">
    <location>
        <begin position="200"/>
        <end position="203"/>
    </location>
</feature>
<feature type="binding site" evidence="1">
    <location>
        <position position="176"/>
    </location>
    <ligand>
        <name>L-aspartate</name>
        <dbReference type="ChEBI" id="CHEBI:29991"/>
    </ligand>
</feature>
<feature type="binding site" evidence="1">
    <location>
        <begin position="222"/>
        <end position="224"/>
    </location>
    <ligand>
        <name>ATP</name>
        <dbReference type="ChEBI" id="CHEBI:30616"/>
    </ligand>
</feature>
<feature type="binding site" evidence="1">
    <location>
        <position position="222"/>
    </location>
    <ligand>
        <name>L-aspartate</name>
        <dbReference type="ChEBI" id="CHEBI:29991"/>
    </ligand>
</feature>
<feature type="binding site" evidence="1">
    <location>
        <position position="452"/>
    </location>
    <ligand>
        <name>L-aspartate</name>
        <dbReference type="ChEBI" id="CHEBI:29991"/>
    </ligand>
</feature>
<feature type="binding site" evidence="1">
    <location>
        <position position="490"/>
    </location>
    <ligand>
        <name>ATP</name>
        <dbReference type="ChEBI" id="CHEBI:30616"/>
    </ligand>
</feature>
<feature type="binding site" evidence="1">
    <location>
        <position position="497"/>
    </location>
    <ligand>
        <name>L-aspartate</name>
        <dbReference type="ChEBI" id="CHEBI:29991"/>
    </ligand>
</feature>
<feature type="binding site" evidence="1">
    <location>
        <begin position="542"/>
        <end position="545"/>
    </location>
    <ligand>
        <name>ATP</name>
        <dbReference type="ChEBI" id="CHEBI:30616"/>
    </ligand>
</feature>
<feature type="site" description="Important for tRNA non-discrimination" evidence="1">
    <location>
        <position position="33"/>
    </location>
</feature>
<evidence type="ECO:0000255" key="1">
    <source>
        <dbReference type="HAMAP-Rule" id="MF_00044"/>
    </source>
</evidence>
<gene>
    <name evidence="1" type="primary">aspS</name>
    <name type="ordered locus">RP145</name>
</gene>